<accession>P40626</accession>
<accession>P12072</accession>
<evidence type="ECO:0000255" key="1">
    <source>
        <dbReference type="PROSITE-ProRule" id="PRU00267"/>
    </source>
</evidence>
<evidence type="ECO:0000256" key="2">
    <source>
        <dbReference type="SAM" id="MobiDB-lite"/>
    </source>
</evidence>
<evidence type="ECO:0000305" key="3"/>
<protein>
    <recommendedName>
        <fullName>High mobility group protein B</fullName>
    </recommendedName>
    <alternativeName>
        <fullName>Non-histone chromosomal protein LG-2</fullName>
    </alternativeName>
</protein>
<reference key="1">
    <citation type="journal article" date="1991" name="Mol. Cell. Biol.">
        <title>Macronuclei and micronuclei in Tetrahymena thermophila contain high-mobility-group-like chromosomal proteins containing a highly conserved eleven-amino-acid putative DNA-binding sequence.</title>
        <authorList>
            <person name="Schulman I.G."/>
            <person name="Wang T."/>
            <person name="Wu M."/>
            <person name="Bowen J."/>
            <person name="Cook R.G."/>
            <person name="Gorovsky M.A."/>
            <person name="Allis C.D."/>
        </authorList>
    </citation>
    <scope>NUCLEOTIDE SEQUENCE [GENOMIC DNA]</scope>
</reference>
<reference key="2">
    <citation type="journal article" date="1987" name="J. Cell Biol.">
        <title>Tetrahymena contain two distinct and unusual high mobility group (HMG)-like proteins.</title>
        <authorList>
            <person name="Schulman I.G."/>
            <person name="Cook R.G."/>
            <person name="Richman R."/>
            <person name="Allis C.D."/>
        </authorList>
    </citation>
    <scope>PROTEIN SEQUENCE OF 70-96 AND 118-141</scope>
</reference>
<proteinExistence type="evidence at protein level"/>
<organism>
    <name type="scientific">Tetrahymena thermophila</name>
    <dbReference type="NCBI Taxonomy" id="5911"/>
    <lineage>
        <taxon>Eukaryota</taxon>
        <taxon>Sar</taxon>
        <taxon>Alveolata</taxon>
        <taxon>Ciliophora</taxon>
        <taxon>Intramacronucleata</taxon>
        <taxon>Oligohymenophorea</taxon>
        <taxon>Hymenostomatida</taxon>
        <taxon>Tetrahymenina</taxon>
        <taxon>Tetrahymenidae</taxon>
        <taxon>Tetrahymena</taxon>
    </lineage>
</organism>
<dbReference type="EMBL" id="M63425">
    <property type="protein sequence ID" value="AAA30121.1"/>
    <property type="molecule type" value="Genomic_DNA"/>
</dbReference>
<dbReference type="PIR" id="B27191">
    <property type="entry name" value="B27191"/>
</dbReference>
<dbReference type="PIR" id="B39668">
    <property type="entry name" value="B39668"/>
</dbReference>
<dbReference type="SMR" id="P40626"/>
<dbReference type="GO" id="GO:0005694">
    <property type="term" value="C:chromosome"/>
    <property type="evidence" value="ECO:0007669"/>
    <property type="project" value="UniProtKB-SubCell"/>
</dbReference>
<dbReference type="GO" id="GO:0005634">
    <property type="term" value="C:nucleus"/>
    <property type="evidence" value="ECO:0007669"/>
    <property type="project" value="UniProtKB-SubCell"/>
</dbReference>
<dbReference type="GO" id="GO:0003677">
    <property type="term" value="F:DNA binding"/>
    <property type="evidence" value="ECO:0007669"/>
    <property type="project" value="UniProtKB-KW"/>
</dbReference>
<dbReference type="CDD" id="cd00084">
    <property type="entry name" value="HMG-box_SF"/>
    <property type="match status" value="1"/>
</dbReference>
<dbReference type="Gene3D" id="1.10.30.10">
    <property type="entry name" value="High mobility group box domain"/>
    <property type="match status" value="1"/>
</dbReference>
<dbReference type="InterPro" id="IPR009071">
    <property type="entry name" value="HMG_box_dom"/>
</dbReference>
<dbReference type="InterPro" id="IPR036910">
    <property type="entry name" value="HMG_box_dom_sf"/>
</dbReference>
<dbReference type="InterPro" id="IPR050342">
    <property type="entry name" value="HMGB"/>
</dbReference>
<dbReference type="PANTHER" id="PTHR48112:SF32">
    <property type="entry name" value="HIGH MOBILITY GROUP PROTEIN B3"/>
    <property type="match status" value="1"/>
</dbReference>
<dbReference type="PANTHER" id="PTHR48112">
    <property type="entry name" value="HIGH MOBILITY GROUP PROTEIN DSP1"/>
    <property type="match status" value="1"/>
</dbReference>
<dbReference type="Pfam" id="PF00505">
    <property type="entry name" value="HMG_box"/>
    <property type="match status" value="1"/>
</dbReference>
<dbReference type="SMART" id="SM00398">
    <property type="entry name" value="HMG"/>
    <property type="match status" value="1"/>
</dbReference>
<dbReference type="SUPFAM" id="SSF47095">
    <property type="entry name" value="HMG-box"/>
    <property type="match status" value="1"/>
</dbReference>
<dbReference type="PROSITE" id="PS50118">
    <property type="entry name" value="HMG_BOX_2"/>
    <property type="match status" value="1"/>
</dbReference>
<comment type="subcellular location">
    <subcellularLocation>
        <location>Nucleus</location>
    </subcellularLocation>
    <subcellularLocation>
        <location>Chromosome</location>
    </subcellularLocation>
    <text>Macronuclei.</text>
</comment>
<comment type="caution">
    <text evidence="3">It is not sure if the block at the amino end is natural or artifactual.</text>
</comment>
<sequence length="143" mass="16473">MSKAASQYATLEDLPSKPKRPQTGFFIYKSEVFAKRRTECPTLKVPEIVSKISEEYKALPEKEKQKYEEAYRKEKATYDKQNDQWKEKYGDIEKSLKDQAKKALKEKTKKSKAAEKELEKSKKKAPAAAPAKKDDKKAPAKKK</sequence>
<feature type="chain" id="PRO_0000048561" description="High mobility group protein B">
    <location>
        <begin position="1"/>
        <end position="143"/>
    </location>
</feature>
<feature type="DNA-binding region" description="HMG box" evidence="1">
    <location>
        <begin position="18"/>
        <end position="86"/>
    </location>
</feature>
<feature type="region of interest" description="Disordered" evidence="2">
    <location>
        <begin position="1"/>
        <end position="22"/>
    </location>
</feature>
<feature type="region of interest" description="Disordered" evidence="2">
    <location>
        <begin position="100"/>
        <end position="143"/>
    </location>
</feature>
<feature type="compositionally biased region" description="Basic and acidic residues" evidence="2">
    <location>
        <begin position="100"/>
        <end position="120"/>
    </location>
</feature>
<feature type="compositionally biased region" description="Basic and acidic residues" evidence="2">
    <location>
        <begin position="131"/>
        <end position="143"/>
    </location>
</feature>
<feature type="modified residue" description="Blocked amino end (Ala)">
    <location>
        <position position="70"/>
    </location>
</feature>
<feature type="sequence conflict" description="In Ref. 2; AA sequence." evidence="3" ref="2">
    <original>KK</original>
    <variation>AP</variation>
    <location>
        <begin position="123"/>
        <end position="124"/>
    </location>
</feature>
<feature type="sequence conflict" description="In Ref. 2; AA sequence." evidence="3" ref="2">
    <original>A</original>
    <variation>P</variation>
    <location>
        <position position="128"/>
    </location>
</feature>
<feature type="sequence conflict" description="In Ref. 2; AA sequence." evidence="3" ref="2">
    <original>KK</original>
    <variation>DD</variation>
    <location>
        <begin position="132"/>
        <end position="133"/>
    </location>
</feature>
<feature type="sequence conflict" description="In Ref. 2; AA sequence." evidence="3" ref="2">
    <original>KK</original>
    <variation>AP</variation>
    <location>
        <begin position="136"/>
        <end position="137"/>
    </location>
</feature>
<name>HMGB_TETTH</name>
<keyword id="KW-0158">Chromosome</keyword>
<keyword id="KW-0903">Direct protein sequencing</keyword>
<keyword id="KW-0238">DNA-binding</keyword>
<keyword id="KW-0539">Nucleus</keyword>